<accession>Q85WX0</accession>
<keyword id="KW-0004">4Fe-4S</keyword>
<keyword id="KW-0148">Chlorophyll</keyword>
<keyword id="KW-0150">Chloroplast</keyword>
<keyword id="KW-0157">Chromophore</keyword>
<keyword id="KW-0249">Electron transport</keyword>
<keyword id="KW-0408">Iron</keyword>
<keyword id="KW-0411">Iron-sulfur</keyword>
<keyword id="KW-0460">Magnesium</keyword>
<keyword id="KW-0472">Membrane</keyword>
<keyword id="KW-0479">Metal-binding</keyword>
<keyword id="KW-0560">Oxidoreductase</keyword>
<keyword id="KW-0602">Photosynthesis</keyword>
<keyword id="KW-0603">Photosystem I</keyword>
<keyword id="KW-0934">Plastid</keyword>
<keyword id="KW-0793">Thylakoid</keyword>
<keyword id="KW-0812">Transmembrane</keyword>
<keyword id="KW-1133">Transmembrane helix</keyword>
<keyword id="KW-0813">Transport</keyword>
<gene>
    <name evidence="1" type="primary">psaB</name>
</gene>
<organism>
    <name type="scientific">Pinus koraiensis</name>
    <name type="common">Korean pine</name>
    <dbReference type="NCBI Taxonomy" id="88728"/>
    <lineage>
        <taxon>Eukaryota</taxon>
        <taxon>Viridiplantae</taxon>
        <taxon>Streptophyta</taxon>
        <taxon>Embryophyta</taxon>
        <taxon>Tracheophyta</taxon>
        <taxon>Spermatophyta</taxon>
        <taxon>Pinopsida</taxon>
        <taxon>Pinidae</taxon>
        <taxon>Conifers I</taxon>
        <taxon>Pinales</taxon>
        <taxon>Pinaceae</taxon>
        <taxon>Pinus</taxon>
        <taxon>Pinus subgen. Strobus</taxon>
    </lineage>
</organism>
<sequence length="734" mass="82493">MASRFPKFSQGLAQDPTTRRIWFGIATAHDFESHDDITEERLYHKIFASHFGQLAIIFLWTSGNLFHVAWQGNFEAWVRDPLHVRPIAHAIWDPHFGQPAIEAFTRGGAPGPVNIAYSGVYQWWYTIGLRTNEDLYAGALFLLFLSVIFLIAGRLHLQPKWRPSVSWFKNAESRLNHHLSGLFGVSSLAWTGHLVHVAIPESRGVHVRWDNFLDELPHPQGLEPFFTGQWNLYAQNPDSSSHLFGTSQGAGTAILTLLGGFHPQTQSLWLTDMAHHHLAIAFVFSIAGHMYRTNFGIGHSMEDILEAHVPPGGLLGRGHKGLYNTINNSLHFQLGLALASLGVITSLVAQHMYSLPAYAFIAQDFTTQAALYTHHQYIAGFIMTGAFAHGAIFLIRDYNPEQNKDNVLARMLEHKEAIISHLSWVSLLLGFHTLGLYVHNDVMLAFGTPEKQILIEPIFAQWIQSAHGKTLYGFDILLSSTSGPAFDAGKSIWLPGWLNAINDNNNSLFSTIGPGDFLVHHAIALGLHTTTLILVKGALDARGSRLMPDKKDFGYSFPCDGPGRGGTCDISAWDAFYLAVFWMLNTIGWVTFYWHWKHITLWQGNVAQFNESSTYLMGWSRDYLWLNSSQLINGYNPFGMNSLSVWAWMFLFGHLVWATGFMFLISWRGYWQELIETLAWAHERTPLANLVRWRDKPVALSIVQARLVGLAHFSVGYIFTYAAFLIASTSGKFG</sequence>
<reference key="1">
    <citation type="submission" date="2003-02" db="EMBL/GenBank/DDBJ databases">
        <title>Complete nucleotide sequence of Pinus koraiensis.</title>
        <authorList>
            <person name="Noh E.W."/>
            <person name="Lee J.S."/>
            <person name="Choi Y.I."/>
            <person name="Han M.S."/>
            <person name="Yi Y.S."/>
            <person name="Han S.U."/>
        </authorList>
    </citation>
    <scope>NUCLEOTIDE SEQUENCE [LARGE SCALE GENOMIC DNA]</scope>
    <source>
        <strain>KangWon16</strain>
    </source>
</reference>
<protein>
    <recommendedName>
        <fullName evidence="1">Photosystem I P700 chlorophyll a apoprotein A2</fullName>
        <ecNumber evidence="1">1.97.1.12</ecNumber>
    </recommendedName>
    <alternativeName>
        <fullName evidence="1">PSI-B</fullName>
    </alternativeName>
    <alternativeName>
        <fullName evidence="1">PsaB</fullName>
    </alternativeName>
</protein>
<geneLocation type="chloroplast"/>
<evidence type="ECO:0000255" key="1">
    <source>
        <dbReference type="HAMAP-Rule" id="MF_00482"/>
    </source>
</evidence>
<name>PSAB_PINKO</name>
<comment type="function">
    <text evidence="1">PsaA and PsaB bind P700, the primary electron donor of photosystem I (PSI), as well as the electron acceptors A0, A1 and FX. PSI is a plastocyanin-ferredoxin oxidoreductase, converting photonic excitation into a charge separation, which transfers an electron from the donor P700 chlorophyll pair to the spectroscopically characterized acceptors A0, A1, FX, FA and FB in turn. Oxidized P700 is reduced on the lumenal side of the thylakoid membrane by plastocyanin.</text>
</comment>
<comment type="catalytic activity">
    <reaction evidence="1">
        <text>reduced [plastocyanin] + hnu + oxidized [2Fe-2S]-[ferredoxin] = oxidized [plastocyanin] + reduced [2Fe-2S]-[ferredoxin]</text>
        <dbReference type="Rhea" id="RHEA:30407"/>
        <dbReference type="Rhea" id="RHEA-COMP:10000"/>
        <dbReference type="Rhea" id="RHEA-COMP:10001"/>
        <dbReference type="Rhea" id="RHEA-COMP:10039"/>
        <dbReference type="Rhea" id="RHEA-COMP:10040"/>
        <dbReference type="ChEBI" id="CHEBI:29036"/>
        <dbReference type="ChEBI" id="CHEBI:30212"/>
        <dbReference type="ChEBI" id="CHEBI:33737"/>
        <dbReference type="ChEBI" id="CHEBI:33738"/>
        <dbReference type="ChEBI" id="CHEBI:49552"/>
        <dbReference type="EC" id="1.97.1.12"/>
    </reaction>
</comment>
<comment type="cofactor">
    <text evidence="1">P700 is a chlorophyll a/chlorophyll a' dimer, A0 is one or more chlorophyll a, A1 is one or both phylloquinones and FX is a shared 4Fe-4S iron-sulfur center.</text>
</comment>
<comment type="subunit">
    <text evidence="1">The PsaA/B heterodimer binds the P700 chlorophyll special pair and subsequent electron acceptors. PSI consists of a core antenna complex that captures photons, and an electron transfer chain that converts photonic excitation into a charge separation. The eukaryotic PSI reaction center is composed of at least 11 subunits.</text>
</comment>
<comment type="subcellular location">
    <subcellularLocation>
        <location>Plastid</location>
        <location>Chloroplast thylakoid membrane</location>
        <topology>Multi-pass membrane protein</topology>
    </subcellularLocation>
</comment>
<comment type="similarity">
    <text evidence="1">Belongs to the PsaA/PsaB family.</text>
</comment>
<feature type="chain" id="PRO_0000088632" description="Photosystem I P700 chlorophyll a apoprotein A2">
    <location>
        <begin position="1"/>
        <end position="734"/>
    </location>
</feature>
<feature type="transmembrane region" description="Helical; Name=I" evidence="1">
    <location>
        <begin position="46"/>
        <end position="69"/>
    </location>
</feature>
<feature type="transmembrane region" description="Helical; Name=II" evidence="1">
    <location>
        <begin position="135"/>
        <end position="158"/>
    </location>
</feature>
<feature type="transmembrane region" description="Helical; Name=III" evidence="1">
    <location>
        <begin position="175"/>
        <end position="199"/>
    </location>
</feature>
<feature type="transmembrane region" description="Helical; Name=IV" evidence="1">
    <location>
        <begin position="273"/>
        <end position="291"/>
    </location>
</feature>
<feature type="transmembrane region" description="Helical; Name=V" evidence="1">
    <location>
        <begin position="330"/>
        <end position="353"/>
    </location>
</feature>
<feature type="transmembrane region" description="Helical; Name=VI" evidence="1">
    <location>
        <begin position="369"/>
        <end position="395"/>
    </location>
</feature>
<feature type="transmembrane region" description="Helical; Name=VII" evidence="1">
    <location>
        <begin position="417"/>
        <end position="439"/>
    </location>
</feature>
<feature type="transmembrane region" description="Helical; Name=VIII" evidence="1">
    <location>
        <begin position="517"/>
        <end position="535"/>
    </location>
</feature>
<feature type="transmembrane region" description="Helical; Name=IX" evidence="1">
    <location>
        <begin position="575"/>
        <end position="596"/>
    </location>
</feature>
<feature type="transmembrane region" description="Helical; Name=X" evidence="1">
    <location>
        <begin position="643"/>
        <end position="665"/>
    </location>
</feature>
<feature type="transmembrane region" description="Helical; Name=XI" evidence="1">
    <location>
        <begin position="707"/>
        <end position="727"/>
    </location>
</feature>
<feature type="binding site" evidence="1">
    <location>
        <position position="559"/>
    </location>
    <ligand>
        <name>[4Fe-4S] cluster</name>
        <dbReference type="ChEBI" id="CHEBI:49883"/>
        <note>ligand shared between dimeric partners</note>
    </ligand>
</feature>
<feature type="binding site" evidence="1">
    <location>
        <position position="568"/>
    </location>
    <ligand>
        <name>[4Fe-4S] cluster</name>
        <dbReference type="ChEBI" id="CHEBI:49883"/>
        <note>ligand shared between dimeric partners</note>
    </ligand>
</feature>
<feature type="binding site" description="axial binding residue" evidence="1">
    <location>
        <position position="654"/>
    </location>
    <ligand>
        <name>chlorophyll a</name>
        <dbReference type="ChEBI" id="CHEBI:58416"/>
        <label>B1</label>
    </ligand>
    <ligandPart>
        <name>Mg</name>
        <dbReference type="ChEBI" id="CHEBI:25107"/>
    </ligandPart>
</feature>
<feature type="binding site" description="axial binding residue" evidence="1">
    <location>
        <position position="662"/>
    </location>
    <ligand>
        <name>chlorophyll a</name>
        <dbReference type="ChEBI" id="CHEBI:58416"/>
        <label>B3</label>
    </ligand>
    <ligandPart>
        <name>Mg</name>
        <dbReference type="ChEBI" id="CHEBI:25107"/>
    </ligandPart>
</feature>
<feature type="binding site" evidence="1">
    <location>
        <position position="670"/>
    </location>
    <ligand>
        <name>chlorophyll a</name>
        <dbReference type="ChEBI" id="CHEBI:58416"/>
        <label>B3</label>
    </ligand>
</feature>
<feature type="binding site" evidence="1">
    <location>
        <position position="671"/>
    </location>
    <ligand>
        <name>phylloquinone</name>
        <dbReference type="ChEBI" id="CHEBI:18067"/>
        <label>B</label>
    </ligand>
</feature>
<dbReference type="EC" id="1.97.1.12" evidence="1"/>
<dbReference type="EMBL" id="AY228468">
    <property type="protein sequence ID" value="AAO74099.1"/>
    <property type="molecule type" value="Genomic_DNA"/>
</dbReference>
<dbReference type="RefSeq" id="NP_817254.1">
    <property type="nucleotide sequence ID" value="NC_004677.2"/>
</dbReference>
<dbReference type="SMR" id="Q85WX0"/>
<dbReference type="GeneID" id="806947"/>
<dbReference type="GO" id="GO:0009535">
    <property type="term" value="C:chloroplast thylakoid membrane"/>
    <property type="evidence" value="ECO:0007669"/>
    <property type="project" value="UniProtKB-SubCell"/>
</dbReference>
<dbReference type="GO" id="GO:0009522">
    <property type="term" value="C:photosystem I"/>
    <property type="evidence" value="ECO:0007669"/>
    <property type="project" value="UniProtKB-KW"/>
</dbReference>
<dbReference type="GO" id="GO:0051539">
    <property type="term" value="F:4 iron, 4 sulfur cluster binding"/>
    <property type="evidence" value="ECO:0007669"/>
    <property type="project" value="UniProtKB-KW"/>
</dbReference>
<dbReference type="GO" id="GO:0016168">
    <property type="term" value="F:chlorophyll binding"/>
    <property type="evidence" value="ECO:0007669"/>
    <property type="project" value="UniProtKB-KW"/>
</dbReference>
<dbReference type="GO" id="GO:0009055">
    <property type="term" value="F:electron transfer activity"/>
    <property type="evidence" value="ECO:0007669"/>
    <property type="project" value="UniProtKB-UniRule"/>
</dbReference>
<dbReference type="GO" id="GO:0000287">
    <property type="term" value="F:magnesium ion binding"/>
    <property type="evidence" value="ECO:0007669"/>
    <property type="project" value="UniProtKB-UniRule"/>
</dbReference>
<dbReference type="GO" id="GO:0016491">
    <property type="term" value="F:oxidoreductase activity"/>
    <property type="evidence" value="ECO:0007669"/>
    <property type="project" value="UniProtKB-KW"/>
</dbReference>
<dbReference type="GO" id="GO:0015979">
    <property type="term" value="P:photosynthesis"/>
    <property type="evidence" value="ECO:0007669"/>
    <property type="project" value="UniProtKB-UniRule"/>
</dbReference>
<dbReference type="FunFam" id="1.20.1130.10:FF:000001">
    <property type="entry name" value="Photosystem I P700 chlorophyll a apoprotein A2"/>
    <property type="match status" value="1"/>
</dbReference>
<dbReference type="Gene3D" id="1.20.1130.10">
    <property type="entry name" value="Photosystem I PsaA/PsaB"/>
    <property type="match status" value="1"/>
</dbReference>
<dbReference type="HAMAP" id="MF_00482">
    <property type="entry name" value="PSI_PsaB"/>
    <property type="match status" value="1"/>
</dbReference>
<dbReference type="InterPro" id="IPR001280">
    <property type="entry name" value="PSI_PsaA/B"/>
</dbReference>
<dbReference type="InterPro" id="IPR020586">
    <property type="entry name" value="PSI_PsaA/B_CS"/>
</dbReference>
<dbReference type="InterPro" id="IPR036408">
    <property type="entry name" value="PSI_PsaA/B_sf"/>
</dbReference>
<dbReference type="InterPro" id="IPR006244">
    <property type="entry name" value="PSI_PsaB"/>
</dbReference>
<dbReference type="NCBIfam" id="TIGR01336">
    <property type="entry name" value="psaB"/>
    <property type="match status" value="1"/>
</dbReference>
<dbReference type="PANTHER" id="PTHR30128">
    <property type="entry name" value="OUTER MEMBRANE PROTEIN, OMPA-RELATED"/>
    <property type="match status" value="1"/>
</dbReference>
<dbReference type="PANTHER" id="PTHR30128:SF19">
    <property type="entry name" value="PHOTOSYSTEM I P700 CHLOROPHYLL A APOPROTEIN A1-RELATED"/>
    <property type="match status" value="1"/>
</dbReference>
<dbReference type="Pfam" id="PF00223">
    <property type="entry name" value="PsaA_PsaB"/>
    <property type="match status" value="1"/>
</dbReference>
<dbReference type="PIRSF" id="PIRSF002905">
    <property type="entry name" value="PSI_A"/>
    <property type="match status" value="1"/>
</dbReference>
<dbReference type="PRINTS" id="PR00257">
    <property type="entry name" value="PHOTSYSPSAAB"/>
</dbReference>
<dbReference type="SUPFAM" id="SSF81558">
    <property type="entry name" value="Photosystem I subunits PsaA/PsaB"/>
    <property type="match status" value="1"/>
</dbReference>
<dbReference type="PROSITE" id="PS00419">
    <property type="entry name" value="PHOTOSYSTEM_I_PSAAB"/>
    <property type="match status" value="1"/>
</dbReference>
<proteinExistence type="inferred from homology"/>